<keyword id="KW-0067">ATP-binding</keyword>
<keyword id="KW-0547">Nucleotide-binding</keyword>
<keyword id="KW-1185">Reference proteome</keyword>
<keyword id="KW-0808">Transferase</keyword>
<sequence>MPNSIIKKYPSKGKLFYVIGASGVGKDSLLHYARQRLANESLVFAHRYITRPVELKGENHIQLTKEEFNNRLQRGCFKFNWHSHELDYGIGVEVDRWLMQGSNVVINGSRGYLNTAVALHPGLVPVLIQVDSNLLHERLIKRGRETLEQIEKRIQRAQAFVGLTSPNMQIIENNSELSVAGEQLVSLLRNQAVKIL</sequence>
<gene>
    <name evidence="1" type="primary">phnN</name>
    <name type="ordered locus">Ping_3685</name>
</gene>
<accession>A1T0U7</accession>
<protein>
    <recommendedName>
        <fullName evidence="1">Ribose 1,5-bisphosphate phosphokinase PhnN</fullName>
        <ecNumber evidence="1">2.7.4.23</ecNumber>
    </recommendedName>
    <alternativeName>
        <fullName evidence="1">Ribose 1,5-bisphosphokinase</fullName>
    </alternativeName>
</protein>
<evidence type="ECO:0000255" key="1">
    <source>
        <dbReference type="HAMAP-Rule" id="MF_00836"/>
    </source>
</evidence>
<feature type="chain" id="PRO_0000412796" description="Ribose 1,5-bisphosphate phosphokinase PhnN">
    <location>
        <begin position="1"/>
        <end position="196"/>
    </location>
</feature>
<comment type="function">
    <text evidence="1">Catalyzes the phosphorylation of ribose 1,5-bisphosphate to 5-phospho-D-ribosyl alpha-1-diphosphate (PRPP).</text>
</comment>
<comment type="catalytic activity">
    <reaction evidence="1">
        <text>alpha-D-ribose 1,5-bisphosphate + ATP = 5-phospho-alpha-D-ribose 1-diphosphate + ADP</text>
        <dbReference type="Rhea" id="RHEA:20109"/>
        <dbReference type="ChEBI" id="CHEBI:30616"/>
        <dbReference type="ChEBI" id="CHEBI:58017"/>
        <dbReference type="ChEBI" id="CHEBI:68688"/>
        <dbReference type="ChEBI" id="CHEBI:456216"/>
        <dbReference type="EC" id="2.7.4.23"/>
    </reaction>
</comment>
<comment type="pathway">
    <text evidence="1">Metabolic intermediate biosynthesis; 5-phospho-alpha-D-ribose 1-diphosphate biosynthesis; 5-phospho-alpha-D-ribose 1-diphosphate from D-ribose 5-phosphate (route II): step 3/3.</text>
</comment>
<comment type="similarity">
    <text evidence="1">Belongs to the ribose 1,5-bisphosphokinase family.</text>
</comment>
<reference key="1">
    <citation type="journal article" date="2008" name="BMC Genomics">
        <title>Genomics of an extreme psychrophile, Psychromonas ingrahamii.</title>
        <authorList>
            <person name="Riley M."/>
            <person name="Staley J.T."/>
            <person name="Danchin A."/>
            <person name="Wang T.Z."/>
            <person name="Brettin T.S."/>
            <person name="Hauser L.J."/>
            <person name="Land M.L."/>
            <person name="Thompson L.S."/>
        </authorList>
    </citation>
    <scope>NUCLEOTIDE SEQUENCE [LARGE SCALE GENOMIC DNA]</scope>
    <source>
        <strain>DSM 17664 / CCUG 51855 / 37</strain>
    </source>
</reference>
<dbReference type="EC" id="2.7.4.23" evidence="1"/>
<dbReference type="EMBL" id="CP000510">
    <property type="protein sequence ID" value="ABM05362.1"/>
    <property type="molecule type" value="Genomic_DNA"/>
</dbReference>
<dbReference type="RefSeq" id="WP_011771910.1">
    <property type="nucleotide sequence ID" value="NC_008709.1"/>
</dbReference>
<dbReference type="SMR" id="A1T0U7"/>
<dbReference type="STRING" id="357804.Ping_3685"/>
<dbReference type="KEGG" id="pin:Ping_3685"/>
<dbReference type="eggNOG" id="COG3709">
    <property type="taxonomic scope" value="Bacteria"/>
</dbReference>
<dbReference type="HOGENOM" id="CLU_102477_0_0_6"/>
<dbReference type="OrthoDB" id="341217at2"/>
<dbReference type="UniPathway" id="UPA00087">
    <property type="reaction ID" value="UER00175"/>
</dbReference>
<dbReference type="Proteomes" id="UP000000639">
    <property type="component" value="Chromosome"/>
</dbReference>
<dbReference type="GO" id="GO:0005524">
    <property type="term" value="F:ATP binding"/>
    <property type="evidence" value="ECO:0007669"/>
    <property type="project" value="UniProtKB-KW"/>
</dbReference>
<dbReference type="GO" id="GO:0033863">
    <property type="term" value="F:ribose 1,5-bisphosphate phosphokinase activity"/>
    <property type="evidence" value="ECO:0007669"/>
    <property type="project" value="UniProtKB-UniRule"/>
</dbReference>
<dbReference type="GO" id="GO:0006015">
    <property type="term" value="P:5-phosphoribose 1-diphosphate biosynthetic process"/>
    <property type="evidence" value="ECO:0007669"/>
    <property type="project" value="UniProtKB-UniRule"/>
</dbReference>
<dbReference type="GO" id="GO:0019634">
    <property type="term" value="P:organic phosphonate metabolic process"/>
    <property type="evidence" value="ECO:0007669"/>
    <property type="project" value="UniProtKB-UniRule"/>
</dbReference>
<dbReference type="Gene3D" id="3.40.50.300">
    <property type="entry name" value="P-loop containing nucleotide triphosphate hydrolases"/>
    <property type="match status" value="1"/>
</dbReference>
<dbReference type="HAMAP" id="MF_00836">
    <property type="entry name" value="PhnN"/>
    <property type="match status" value="1"/>
</dbReference>
<dbReference type="InterPro" id="IPR008145">
    <property type="entry name" value="GK/Ca_channel_bsu"/>
</dbReference>
<dbReference type="InterPro" id="IPR008144">
    <property type="entry name" value="Guanylate_kin-like_dom"/>
</dbReference>
<dbReference type="InterPro" id="IPR027417">
    <property type="entry name" value="P-loop_NTPase"/>
</dbReference>
<dbReference type="InterPro" id="IPR012699">
    <property type="entry name" value="PhnN"/>
</dbReference>
<dbReference type="NCBIfam" id="TIGR02322">
    <property type="entry name" value="phosphon_PhnN"/>
    <property type="match status" value="1"/>
</dbReference>
<dbReference type="NCBIfam" id="NF007485">
    <property type="entry name" value="PRK10078.1"/>
    <property type="match status" value="1"/>
</dbReference>
<dbReference type="SMART" id="SM00072">
    <property type="entry name" value="GuKc"/>
    <property type="match status" value="1"/>
</dbReference>
<dbReference type="SUPFAM" id="SSF52540">
    <property type="entry name" value="P-loop containing nucleoside triphosphate hydrolases"/>
    <property type="match status" value="1"/>
</dbReference>
<dbReference type="PROSITE" id="PS50052">
    <property type="entry name" value="GUANYLATE_KINASE_2"/>
    <property type="match status" value="1"/>
</dbReference>
<name>PHNN_PSYIN</name>
<proteinExistence type="inferred from homology"/>
<organism>
    <name type="scientific">Psychromonas ingrahamii (strain DSM 17664 / CCUG 51855 / 37)</name>
    <dbReference type="NCBI Taxonomy" id="357804"/>
    <lineage>
        <taxon>Bacteria</taxon>
        <taxon>Pseudomonadati</taxon>
        <taxon>Pseudomonadota</taxon>
        <taxon>Gammaproteobacteria</taxon>
        <taxon>Alteromonadales</taxon>
        <taxon>Psychromonadaceae</taxon>
        <taxon>Psychromonas</taxon>
    </lineage>
</organism>